<keyword id="KW-0150">Chloroplast</keyword>
<keyword id="KW-0934">Plastid</keyword>
<keyword id="KW-1185">Reference proteome</keyword>
<keyword id="KW-0694">RNA-binding</keyword>
<keyword id="KW-0809">Transit peptide</keyword>
<keyword id="KW-0820">tRNA-binding</keyword>
<sequence length="186" mass="20136">MAMTAASVFGSGGCLELLTSSKAMRGKLWTRLAPFISKRHASTSQTSLSSSSSSCSVINPWLFVGLGNPGEKYQCTRHNVGFDMIDMFAQSQGISLTRHPFKALFGEGMVEGVPVLLAKPQTYMNLSGESVGPLAAYYKLPLNRVLVAFDDMDLPCGVLRLQPKGGYGRHNGSVDFIIMCFNEVIC</sequence>
<protein>
    <recommendedName>
        <fullName>CRS2-like protein, chloroplastic</fullName>
    </recommendedName>
    <alternativeName>
        <fullName>Chloroplastic RNA splicing factor 2-like protein</fullName>
    </alternativeName>
</protein>
<dbReference type="EMBL" id="DP000009">
    <property type="protein sequence ID" value="ABF95914.1"/>
    <property type="molecule type" value="Genomic_DNA"/>
</dbReference>
<dbReference type="EMBL" id="AP008209">
    <property type="protein sequence ID" value="BAF12015.1"/>
    <property type="molecule type" value="Genomic_DNA"/>
</dbReference>
<dbReference type="EMBL" id="AP014959">
    <property type="protein sequence ID" value="BAS84177.1"/>
    <property type="molecule type" value="Genomic_DNA"/>
</dbReference>
<dbReference type="EMBL" id="AK073756">
    <property type="protein sequence ID" value="BAG93623.1"/>
    <property type="molecule type" value="mRNA"/>
</dbReference>
<dbReference type="SMR" id="Q10LI6"/>
<dbReference type="STRING" id="39947.Q10LI6"/>
<dbReference type="PaxDb" id="39947-Q10LI6"/>
<dbReference type="EnsemblPlants" id="Os03t0347800-01">
    <property type="protein sequence ID" value="Os03t0347800-01"/>
    <property type="gene ID" value="Os03g0347800"/>
</dbReference>
<dbReference type="Gramene" id="Os03t0347800-01">
    <property type="protein sequence ID" value="Os03t0347800-01"/>
    <property type="gene ID" value="Os03g0347800"/>
</dbReference>
<dbReference type="KEGG" id="dosa:Os03g0347800"/>
<dbReference type="eggNOG" id="KOG2255">
    <property type="taxonomic scope" value="Eukaryota"/>
</dbReference>
<dbReference type="HOGENOM" id="CLU_062456_5_1_1"/>
<dbReference type="InParanoid" id="Q10LI6"/>
<dbReference type="OMA" id="IMCFNEV"/>
<dbReference type="Proteomes" id="UP000000763">
    <property type="component" value="Chromosome 3"/>
</dbReference>
<dbReference type="Proteomes" id="UP000059680">
    <property type="component" value="Chromosome 3"/>
</dbReference>
<dbReference type="GO" id="GO:0009507">
    <property type="term" value="C:chloroplast"/>
    <property type="evidence" value="ECO:0007669"/>
    <property type="project" value="UniProtKB-SubCell"/>
</dbReference>
<dbReference type="GO" id="GO:0004045">
    <property type="term" value="F:peptidyl-tRNA hydrolase activity"/>
    <property type="evidence" value="ECO:0000318"/>
    <property type="project" value="GO_Central"/>
</dbReference>
<dbReference type="GO" id="GO:0000049">
    <property type="term" value="F:tRNA binding"/>
    <property type="evidence" value="ECO:0007669"/>
    <property type="project" value="UniProtKB-KW"/>
</dbReference>
<dbReference type="FunFam" id="3.40.50.1470:FF:000010">
    <property type="entry name" value="CRS2-like protein, chloroplastic"/>
    <property type="match status" value="1"/>
</dbReference>
<dbReference type="Gene3D" id="3.40.50.1470">
    <property type="entry name" value="Peptidyl-tRNA hydrolase"/>
    <property type="match status" value="1"/>
</dbReference>
<dbReference type="InterPro" id="IPR001328">
    <property type="entry name" value="Pept_tRNA_hydro"/>
</dbReference>
<dbReference type="InterPro" id="IPR018171">
    <property type="entry name" value="Pept_tRNA_hydro_CS"/>
</dbReference>
<dbReference type="InterPro" id="IPR036416">
    <property type="entry name" value="Pept_tRNA_hydro_sf"/>
</dbReference>
<dbReference type="NCBIfam" id="TIGR00447">
    <property type="entry name" value="pth"/>
    <property type="match status" value="1"/>
</dbReference>
<dbReference type="PANTHER" id="PTHR17224">
    <property type="entry name" value="PEPTIDYL-TRNA HYDROLASE"/>
    <property type="match status" value="1"/>
</dbReference>
<dbReference type="PANTHER" id="PTHR17224:SF4">
    <property type="entry name" value="PEPTIDYL-TRNA HYDROLASE, MITOCHONDRIAL"/>
    <property type="match status" value="1"/>
</dbReference>
<dbReference type="Pfam" id="PF01195">
    <property type="entry name" value="Pept_tRNA_hydro"/>
    <property type="match status" value="1"/>
</dbReference>
<dbReference type="SUPFAM" id="SSF53178">
    <property type="entry name" value="Peptidyl-tRNA hydrolase-like"/>
    <property type="match status" value="1"/>
</dbReference>
<dbReference type="PROSITE" id="PS01195">
    <property type="entry name" value="PEPT_TRNA_HYDROL_1"/>
    <property type="match status" value="1"/>
</dbReference>
<gene>
    <name type="ordered locus">Os03g0347800</name>
    <name type="ordered locus">LOC_Os03g22610</name>
</gene>
<feature type="transit peptide" description="Chloroplast" evidence="2">
    <location>
        <begin position="1"/>
        <end position="49"/>
    </location>
</feature>
<feature type="chain" id="PRO_0000280534" description="CRS2-like protein, chloroplastic">
    <location>
        <begin position="50"/>
        <end position="186"/>
    </location>
</feature>
<feature type="active site" description="Proton acceptor" evidence="1">
    <location>
        <position position="78"/>
    </location>
</feature>
<feature type="binding site" evidence="1">
    <location>
        <position position="73"/>
    </location>
    <ligand>
        <name>tRNA</name>
        <dbReference type="ChEBI" id="CHEBI:17843"/>
    </ligand>
</feature>
<feature type="binding site" evidence="1">
    <location>
        <position position="123"/>
    </location>
    <ligand>
        <name>tRNA</name>
        <dbReference type="ChEBI" id="CHEBI:17843"/>
    </ligand>
</feature>
<feature type="binding site" evidence="1">
    <location>
        <position position="125"/>
    </location>
    <ligand>
        <name>tRNA</name>
        <dbReference type="ChEBI" id="CHEBI:17843"/>
    </ligand>
</feature>
<feature type="binding site" evidence="1">
    <location>
        <position position="171"/>
    </location>
    <ligand>
        <name>tRNA</name>
        <dbReference type="ChEBI" id="CHEBI:17843"/>
    </ligand>
</feature>
<feature type="site" description="Stabilizes the basic form of H active site to accept a proton" evidence="1">
    <location>
        <position position="150"/>
    </location>
</feature>
<organism>
    <name type="scientific">Oryza sativa subsp. japonica</name>
    <name type="common">Rice</name>
    <dbReference type="NCBI Taxonomy" id="39947"/>
    <lineage>
        <taxon>Eukaryota</taxon>
        <taxon>Viridiplantae</taxon>
        <taxon>Streptophyta</taxon>
        <taxon>Embryophyta</taxon>
        <taxon>Tracheophyta</taxon>
        <taxon>Spermatophyta</taxon>
        <taxon>Magnoliopsida</taxon>
        <taxon>Liliopsida</taxon>
        <taxon>Poales</taxon>
        <taxon>Poaceae</taxon>
        <taxon>BOP clade</taxon>
        <taxon>Oryzoideae</taxon>
        <taxon>Oryzeae</taxon>
        <taxon>Oryzinae</taxon>
        <taxon>Oryza</taxon>
        <taxon>Oryza sativa</taxon>
    </lineage>
</organism>
<comment type="subcellular location">
    <subcellularLocation>
        <location evidence="3">Plastid</location>
        <location evidence="3">Chloroplast</location>
    </subcellularLocation>
</comment>
<comment type="similarity">
    <text evidence="3">Belongs to the PTH family.</text>
</comment>
<proteinExistence type="evidence at transcript level"/>
<evidence type="ECO:0000250" key="1">
    <source>
        <dbReference type="UniProtKB" id="P0A7D1"/>
    </source>
</evidence>
<evidence type="ECO:0000255" key="2"/>
<evidence type="ECO:0000305" key="3"/>
<reference key="1">
    <citation type="journal article" date="2005" name="Genome Res.">
        <title>Sequence, annotation, and analysis of synteny between rice chromosome 3 and diverged grass species.</title>
        <authorList>
            <consortium name="The rice chromosome 3 sequencing consortium"/>
            <person name="Buell C.R."/>
            <person name="Yuan Q."/>
            <person name="Ouyang S."/>
            <person name="Liu J."/>
            <person name="Zhu W."/>
            <person name="Wang A."/>
            <person name="Maiti R."/>
            <person name="Haas B."/>
            <person name="Wortman J."/>
            <person name="Pertea M."/>
            <person name="Jones K.M."/>
            <person name="Kim M."/>
            <person name="Overton L."/>
            <person name="Tsitrin T."/>
            <person name="Fadrosh D."/>
            <person name="Bera J."/>
            <person name="Weaver B."/>
            <person name="Jin S."/>
            <person name="Johri S."/>
            <person name="Reardon M."/>
            <person name="Webb K."/>
            <person name="Hill J."/>
            <person name="Moffat K."/>
            <person name="Tallon L."/>
            <person name="Van Aken S."/>
            <person name="Lewis M."/>
            <person name="Utterback T."/>
            <person name="Feldblyum T."/>
            <person name="Zismann V."/>
            <person name="Iobst S."/>
            <person name="Hsiao J."/>
            <person name="de Vazeille A.R."/>
            <person name="Salzberg S.L."/>
            <person name="White O."/>
            <person name="Fraser C.M."/>
            <person name="Yu Y."/>
            <person name="Kim H."/>
            <person name="Rambo T."/>
            <person name="Currie J."/>
            <person name="Collura K."/>
            <person name="Kernodle-Thompson S."/>
            <person name="Wei F."/>
            <person name="Kudrna K."/>
            <person name="Ammiraju J.S.S."/>
            <person name="Luo M."/>
            <person name="Goicoechea J.L."/>
            <person name="Wing R.A."/>
            <person name="Henry D."/>
            <person name="Oates R."/>
            <person name="Palmer M."/>
            <person name="Pries G."/>
            <person name="Saski C."/>
            <person name="Simmons J."/>
            <person name="Soderlund C."/>
            <person name="Nelson W."/>
            <person name="de la Bastide M."/>
            <person name="Spiegel L."/>
            <person name="Nascimento L."/>
            <person name="Huang E."/>
            <person name="Preston R."/>
            <person name="Zutavern T."/>
            <person name="Palmer L."/>
            <person name="O'Shaughnessy A."/>
            <person name="Dike S."/>
            <person name="McCombie W.R."/>
            <person name="Minx P."/>
            <person name="Cordum H."/>
            <person name="Wilson R."/>
            <person name="Jin W."/>
            <person name="Lee H.R."/>
            <person name="Jiang J."/>
            <person name="Jackson S."/>
        </authorList>
    </citation>
    <scope>NUCLEOTIDE SEQUENCE [LARGE SCALE GENOMIC DNA]</scope>
    <source>
        <strain>cv. Nipponbare</strain>
    </source>
</reference>
<reference key="2">
    <citation type="journal article" date="2005" name="Nature">
        <title>The map-based sequence of the rice genome.</title>
        <authorList>
            <consortium name="International rice genome sequencing project (IRGSP)"/>
        </authorList>
    </citation>
    <scope>NUCLEOTIDE SEQUENCE [LARGE SCALE GENOMIC DNA]</scope>
    <source>
        <strain>cv. Nipponbare</strain>
    </source>
</reference>
<reference key="3">
    <citation type="journal article" date="2008" name="Nucleic Acids Res.">
        <title>The rice annotation project database (RAP-DB): 2008 update.</title>
        <authorList>
            <consortium name="The rice annotation project (RAP)"/>
        </authorList>
    </citation>
    <scope>GENOME REANNOTATION</scope>
    <source>
        <strain>cv. Nipponbare</strain>
    </source>
</reference>
<reference key="4">
    <citation type="journal article" date="2013" name="Rice">
        <title>Improvement of the Oryza sativa Nipponbare reference genome using next generation sequence and optical map data.</title>
        <authorList>
            <person name="Kawahara Y."/>
            <person name="de la Bastide M."/>
            <person name="Hamilton J.P."/>
            <person name="Kanamori H."/>
            <person name="McCombie W.R."/>
            <person name="Ouyang S."/>
            <person name="Schwartz D.C."/>
            <person name="Tanaka T."/>
            <person name="Wu J."/>
            <person name="Zhou S."/>
            <person name="Childs K.L."/>
            <person name="Davidson R.M."/>
            <person name="Lin H."/>
            <person name="Quesada-Ocampo L."/>
            <person name="Vaillancourt B."/>
            <person name="Sakai H."/>
            <person name="Lee S.S."/>
            <person name="Kim J."/>
            <person name="Numa H."/>
            <person name="Itoh T."/>
            <person name="Buell C.R."/>
            <person name="Matsumoto T."/>
        </authorList>
    </citation>
    <scope>GENOME REANNOTATION</scope>
    <source>
        <strain>cv. Nipponbare</strain>
    </source>
</reference>
<reference key="5">
    <citation type="journal article" date="2003" name="Science">
        <title>Collection, mapping, and annotation of over 28,000 cDNA clones from japonica rice.</title>
        <authorList>
            <consortium name="The rice full-length cDNA consortium"/>
        </authorList>
    </citation>
    <scope>NUCLEOTIDE SEQUENCE [LARGE SCALE MRNA]</scope>
    <source>
        <strain>cv. Nipponbare</strain>
    </source>
</reference>
<name>CRS2L_ORYSJ</name>
<accession>Q10LI6</accession>
<accession>B7EMM6</accession>